<feature type="chain" id="PRO_0000137916" description="Glycerol-3-phosphate dehydrogenase [NAD(P)+]">
    <location>
        <begin position="1"/>
        <end position="327"/>
    </location>
</feature>
<feature type="active site" description="Proton acceptor" evidence="1">
    <location>
        <position position="191"/>
    </location>
</feature>
<feature type="binding site" evidence="1">
    <location>
        <position position="14"/>
    </location>
    <ligand>
        <name>NADPH</name>
        <dbReference type="ChEBI" id="CHEBI:57783"/>
    </ligand>
</feature>
<feature type="binding site" evidence="1">
    <location>
        <position position="35"/>
    </location>
    <ligand>
        <name>NADPH</name>
        <dbReference type="ChEBI" id="CHEBI:57783"/>
    </ligand>
</feature>
<feature type="binding site" evidence="1">
    <location>
        <position position="108"/>
    </location>
    <ligand>
        <name>NADPH</name>
        <dbReference type="ChEBI" id="CHEBI:57783"/>
    </ligand>
</feature>
<feature type="binding site" evidence="1">
    <location>
        <position position="108"/>
    </location>
    <ligand>
        <name>sn-glycerol 3-phosphate</name>
        <dbReference type="ChEBI" id="CHEBI:57597"/>
    </ligand>
</feature>
<feature type="binding site" evidence="1">
    <location>
        <position position="136"/>
    </location>
    <ligand>
        <name>sn-glycerol 3-phosphate</name>
        <dbReference type="ChEBI" id="CHEBI:57597"/>
    </ligand>
</feature>
<feature type="binding site" evidence="1">
    <location>
        <position position="140"/>
    </location>
    <ligand>
        <name>NADPH</name>
        <dbReference type="ChEBI" id="CHEBI:57783"/>
    </ligand>
</feature>
<feature type="binding site" evidence="1">
    <location>
        <position position="191"/>
    </location>
    <ligand>
        <name>sn-glycerol 3-phosphate</name>
        <dbReference type="ChEBI" id="CHEBI:57597"/>
    </ligand>
</feature>
<feature type="binding site" evidence="1">
    <location>
        <position position="244"/>
    </location>
    <ligand>
        <name>sn-glycerol 3-phosphate</name>
        <dbReference type="ChEBI" id="CHEBI:57597"/>
    </ligand>
</feature>
<feature type="binding site" evidence="1">
    <location>
        <position position="254"/>
    </location>
    <ligand>
        <name>sn-glycerol 3-phosphate</name>
        <dbReference type="ChEBI" id="CHEBI:57597"/>
    </ligand>
</feature>
<feature type="binding site" evidence="1">
    <location>
        <position position="255"/>
    </location>
    <ligand>
        <name>NADPH</name>
        <dbReference type="ChEBI" id="CHEBI:57783"/>
    </ligand>
</feature>
<feature type="binding site" evidence="1">
    <location>
        <position position="255"/>
    </location>
    <ligand>
        <name>sn-glycerol 3-phosphate</name>
        <dbReference type="ChEBI" id="CHEBI:57597"/>
    </ligand>
</feature>
<feature type="binding site" evidence="1">
    <location>
        <position position="256"/>
    </location>
    <ligand>
        <name>sn-glycerol 3-phosphate</name>
        <dbReference type="ChEBI" id="CHEBI:57597"/>
    </ligand>
</feature>
<feature type="binding site" evidence="1">
    <location>
        <position position="275"/>
    </location>
    <ligand>
        <name>NADPH</name>
        <dbReference type="ChEBI" id="CHEBI:57783"/>
    </ligand>
</feature>
<feature type="binding site" evidence="1">
    <location>
        <position position="277"/>
    </location>
    <ligand>
        <name>NADPH</name>
        <dbReference type="ChEBI" id="CHEBI:57783"/>
    </ligand>
</feature>
<comment type="function">
    <text evidence="1">Catalyzes the reduction of the glycolytic intermediate dihydroxyacetone phosphate (DHAP) to sn-glycerol 3-phosphate (G3P), the key precursor for phospholipid synthesis.</text>
</comment>
<comment type="catalytic activity">
    <reaction evidence="1">
        <text>sn-glycerol 3-phosphate + NAD(+) = dihydroxyacetone phosphate + NADH + H(+)</text>
        <dbReference type="Rhea" id="RHEA:11092"/>
        <dbReference type="ChEBI" id="CHEBI:15378"/>
        <dbReference type="ChEBI" id="CHEBI:57540"/>
        <dbReference type="ChEBI" id="CHEBI:57597"/>
        <dbReference type="ChEBI" id="CHEBI:57642"/>
        <dbReference type="ChEBI" id="CHEBI:57945"/>
        <dbReference type="EC" id="1.1.1.94"/>
    </reaction>
    <physiologicalReaction direction="right-to-left" evidence="1">
        <dbReference type="Rhea" id="RHEA:11094"/>
    </physiologicalReaction>
</comment>
<comment type="catalytic activity">
    <reaction evidence="1">
        <text>sn-glycerol 3-phosphate + NADP(+) = dihydroxyacetone phosphate + NADPH + H(+)</text>
        <dbReference type="Rhea" id="RHEA:11096"/>
        <dbReference type="ChEBI" id="CHEBI:15378"/>
        <dbReference type="ChEBI" id="CHEBI:57597"/>
        <dbReference type="ChEBI" id="CHEBI:57642"/>
        <dbReference type="ChEBI" id="CHEBI:57783"/>
        <dbReference type="ChEBI" id="CHEBI:58349"/>
        <dbReference type="EC" id="1.1.1.94"/>
    </reaction>
    <physiologicalReaction direction="right-to-left" evidence="1">
        <dbReference type="Rhea" id="RHEA:11098"/>
    </physiologicalReaction>
</comment>
<comment type="pathway">
    <text evidence="1">Membrane lipid metabolism; glycerophospholipid metabolism.</text>
</comment>
<comment type="subcellular location">
    <subcellularLocation>
        <location evidence="1">Cytoplasm</location>
    </subcellularLocation>
</comment>
<comment type="similarity">
    <text evidence="1">Belongs to the NAD-dependent glycerol-3-phosphate dehydrogenase family.</text>
</comment>
<accession>Q8UC48</accession>
<sequence length="327" mass="33601">MQREKIVVIGAGAFGTALAVVIALENRHDVTLLGRDPSLMADLRNERVHEAALPGVELPDALGFSAEPDVLAGASIVLFAMPSQAHADAAQHYGPYLASDSIIVTCAKGIDRNSGRLLTELLETELPHHPIAVLSGPGFAADIARGLPTAMAIAAEDATVAERLATTISGKTFRLYASTDRIGVQLGGALKNVLAIAAGIVEGAGLGDSARAALISRGLAEMSRLIVAMGGKADTVRGLSGLGDLVLTATSHQSRNLRFGIALGRGEGKDMSGGLVEGAFAAAVAARLGEHHAIDMPVTEAVAAIIDGNLDVASAMQQLMTRPITTE</sequence>
<dbReference type="EC" id="1.1.1.94" evidence="1"/>
<dbReference type="EMBL" id="AE007869">
    <property type="protein sequence ID" value="AAK88372.1"/>
    <property type="molecule type" value="Genomic_DNA"/>
</dbReference>
<dbReference type="PIR" id="AI2901">
    <property type="entry name" value="AI2901"/>
</dbReference>
<dbReference type="PIR" id="C97677">
    <property type="entry name" value="C97677"/>
</dbReference>
<dbReference type="RefSeq" id="NP_355587.1">
    <property type="nucleotide sequence ID" value="NC_003062.2"/>
</dbReference>
<dbReference type="RefSeq" id="WP_010972464.1">
    <property type="nucleotide sequence ID" value="NC_003062.2"/>
</dbReference>
<dbReference type="SMR" id="Q8UC48"/>
<dbReference type="STRING" id="176299.Atu2650"/>
<dbReference type="EnsemblBacteria" id="AAK88372">
    <property type="protein sequence ID" value="AAK88372"/>
    <property type="gene ID" value="Atu2650"/>
</dbReference>
<dbReference type="GeneID" id="1134688"/>
<dbReference type="KEGG" id="atu:Atu2650"/>
<dbReference type="PATRIC" id="fig|176299.10.peg.2655"/>
<dbReference type="eggNOG" id="COG0240">
    <property type="taxonomic scope" value="Bacteria"/>
</dbReference>
<dbReference type="HOGENOM" id="CLU_033449_0_2_5"/>
<dbReference type="OrthoDB" id="9812273at2"/>
<dbReference type="PhylomeDB" id="Q8UC48"/>
<dbReference type="BioCyc" id="AGRO:ATU2650-MONOMER"/>
<dbReference type="UniPathway" id="UPA00940"/>
<dbReference type="Proteomes" id="UP000000813">
    <property type="component" value="Chromosome circular"/>
</dbReference>
<dbReference type="GO" id="GO:0005829">
    <property type="term" value="C:cytosol"/>
    <property type="evidence" value="ECO:0007669"/>
    <property type="project" value="TreeGrafter"/>
</dbReference>
<dbReference type="GO" id="GO:0047952">
    <property type="term" value="F:glycerol-3-phosphate dehydrogenase [NAD(P)+] activity"/>
    <property type="evidence" value="ECO:0007669"/>
    <property type="project" value="UniProtKB-UniRule"/>
</dbReference>
<dbReference type="GO" id="GO:0051287">
    <property type="term" value="F:NAD binding"/>
    <property type="evidence" value="ECO:0007669"/>
    <property type="project" value="InterPro"/>
</dbReference>
<dbReference type="GO" id="GO:0005975">
    <property type="term" value="P:carbohydrate metabolic process"/>
    <property type="evidence" value="ECO:0007669"/>
    <property type="project" value="InterPro"/>
</dbReference>
<dbReference type="GO" id="GO:0046167">
    <property type="term" value="P:glycerol-3-phosphate biosynthetic process"/>
    <property type="evidence" value="ECO:0007669"/>
    <property type="project" value="UniProtKB-UniRule"/>
</dbReference>
<dbReference type="GO" id="GO:0046168">
    <property type="term" value="P:glycerol-3-phosphate catabolic process"/>
    <property type="evidence" value="ECO:0007669"/>
    <property type="project" value="InterPro"/>
</dbReference>
<dbReference type="GO" id="GO:0006650">
    <property type="term" value="P:glycerophospholipid metabolic process"/>
    <property type="evidence" value="ECO:0007669"/>
    <property type="project" value="UniProtKB-UniRule"/>
</dbReference>
<dbReference type="GO" id="GO:0008654">
    <property type="term" value="P:phospholipid biosynthetic process"/>
    <property type="evidence" value="ECO:0007669"/>
    <property type="project" value="UniProtKB-KW"/>
</dbReference>
<dbReference type="FunFam" id="3.40.50.720:FF:000019">
    <property type="entry name" value="Glycerol-3-phosphate dehydrogenase [NAD(P)+]"/>
    <property type="match status" value="1"/>
</dbReference>
<dbReference type="Gene3D" id="1.10.1040.10">
    <property type="entry name" value="N-(1-d-carboxylethyl)-l-norvaline Dehydrogenase, domain 2"/>
    <property type="match status" value="1"/>
</dbReference>
<dbReference type="Gene3D" id="3.40.50.720">
    <property type="entry name" value="NAD(P)-binding Rossmann-like Domain"/>
    <property type="match status" value="1"/>
</dbReference>
<dbReference type="HAMAP" id="MF_00394">
    <property type="entry name" value="NAD_Glyc3P_dehydrog"/>
    <property type="match status" value="1"/>
</dbReference>
<dbReference type="InterPro" id="IPR008927">
    <property type="entry name" value="6-PGluconate_DH-like_C_sf"/>
</dbReference>
<dbReference type="InterPro" id="IPR013328">
    <property type="entry name" value="6PGD_dom2"/>
</dbReference>
<dbReference type="InterPro" id="IPR006168">
    <property type="entry name" value="G3P_DH_NAD-dep"/>
</dbReference>
<dbReference type="InterPro" id="IPR006109">
    <property type="entry name" value="G3P_DH_NAD-dep_C"/>
</dbReference>
<dbReference type="InterPro" id="IPR011128">
    <property type="entry name" value="G3P_DH_NAD-dep_N"/>
</dbReference>
<dbReference type="InterPro" id="IPR036291">
    <property type="entry name" value="NAD(P)-bd_dom_sf"/>
</dbReference>
<dbReference type="NCBIfam" id="NF000940">
    <property type="entry name" value="PRK00094.1-2"/>
    <property type="match status" value="1"/>
</dbReference>
<dbReference type="NCBIfam" id="NF000942">
    <property type="entry name" value="PRK00094.1-4"/>
    <property type="match status" value="1"/>
</dbReference>
<dbReference type="PANTHER" id="PTHR11728">
    <property type="entry name" value="GLYCEROL-3-PHOSPHATE DEHYDROGENASE"/>
    <property type="match status" value="1"/>
</dbReference>
<dbReference type="PANTHER" id="PTHR11728:SF1">
    <property type="entry name" value="GLYCEROL-3-PHOSPHATE DEHYDROGENASE [NAD(+)] 2, CHLOROPLASTIC"/>
    <property type="match status" value="1"/>
</dbReference>
<dbReference type="Pfam" id="PF07479">
    <property type="entry name" value="NAD_Gly3P_dh_C"/>
    <property type="match status" value="1"/>
</dbReference>
<dbReference type="Pfam" id="PF01210">
    <property type="entry name" value="NAD_Gly3P_dh_N"/>
    <property type="match status" value="1"/>
</dbReference>
<dbReference type="PIRSF" id="PIRSF000114">
    <property type="entry name" value="Glycerol-3-P_dh"/>
    <property type="match status" value="1"/>
</dbReference>
<dbReference type="PRINTS" id="PR00077">
    <property type="entry name" value="GPDHDRGNASE"/>
</dbReference>
<dbReference type="SUPFAM" id="SSF48179">
    <property type="entry name" value="6-phosphogluconate dehydrogenase C-terminal domain-like"/>
    <property type="match status" value="1"/>
</dbReference>
<dbReference type="SUPFAM" id="SSF51735">
    <property type="entry name" value="NAD(P)-binding Rossmann-fold domains"/>
    <property type="match status" value="1"/>
</dbReference>
<dbReference type="PROSITE" id="PS00957">
    <property type="entry name" value="NAD_G3PDH"/>
    <property type="match status" value="1"/>
</dbReference>
<evidence type="ECO:0000255" key="1">
    <source>
        <dbReference type="HAMAP-Rule" id="MF_00394"/>
    </source>
</evidence>
<gene>
    <name evidence="1" type="primary">gpsA</name>
    <name type="ordered locus">Atu2650</name>
    <name type="ORF">AGR_C_4804</name>
</gene>
<protein>
    <recommendedName>
        <fullName evidence="1">Glycerol-3-phosphate dehydrogenase [NAD(P)+]</fullName>
        <ecNumber evidence="1">1.1.1.94</ecNumber>
    </recommendedName>
    <alternativeName>
        <fullName evidence="1">NAD(P)(+)-dependent glycerol-3-phosphate dehydrogenase</fullName>
    </alternativeName>
    <alternativeName>
        <fullName evidence="1">NAD(P)H-dependent dihydroxyacetone-phosphate reductase</fullName>
    </alternativeName>
</protein>
<proteinExistence type="inferred from homology"/>
<name>GPDA_AGRFC</name>
<keyword id="KW-0963">Cytoplasm</keyword>
<keyword id="KW-0444">Lipid biosynthesis</keyword>
<keyword id="KW-0443">Lipid metabolism</keyword>
<keyword id="KW-0520">NAD</keyword>
<keyword id="KW-0521">NADP</keyword>
<keyword id="KW-0547">Nucleotide-binding</keyword>
<keyword id="KW-0560">Oxidoreductase</keyword>
<keyword id="KW-0594">Phospholipid biosynthesis</keyword>
<keyword id="KW-1208">Phospholipid metabolism</keyword>
<keyword id="KW-1185">Reference proteome</keyword>
<reference key="1">
    <citation type="journal article" date="2001" name="Science">
        <title>The genome of the natural genetic engineer Agrobacterium tumefaciens C58.</title>
        <authorList>
            <person name="Wood D.W."/>
            <person name="Setubal J.C."/>
            <person name="Kaul R."/>
            <person name="Monks D.E."/>
            <person name="Kitajima J.P."/>
            <person name="Okura V.K."/>
            <person name="Zhou Y."/>
            <person name="Chen L."/>
            <person name="Wood G.E."/>
            <person name="Almeida N.F. Jr."/>
            <person name="Woo L."/>
            <person name="Chen Y."/>
            <person name="Paulsen I.T."/>
            <person name="Eisen J.A."/>
            <person name="Karp P.D."/>
            <person name="Bovee D. Sr."/>
            <person name="Chapman P."/>
            <person name="Clendenning J."/>
            <person name="Deatherage G."/>
            <person name="Gillet W."/>
            <person name="Grant C."/>
            <person name="Kutyavin T."/>
            <person name="Levy R."/>
            <person name="Li M.-J."/>
            <person name="McClelland E."/>
            <person name="Palmieri A."/>
            <person name="Raymond C."/>
            <person name="Rouse G."/>
            <person name="Saenphimmachak C."/>
            <person name="Wu Z."/>
            <person name="Romero P."/>
            <person name="Gordon D."/>
            <person name="Zhang S."/>
            <person name="Yoo H."/>
            <person name="Tao Y."/>
            <person name="Biddle P."/>
            <person name="Jung M."/>
            <person name="Krespan W."/>
            <person name="Perry M."/>
            <person name="Gordon-Kamm B."/>
            <person name="Liao L."/>
            <person name="Kim S."/>
            <person name="Hendrick C."/>
            <person name="Zhao Z.-Y."/>
            <person name="Dolan M."/>
            <person name="Chumley F."/>
            <person name="Tingey S.V."/>
            <person name="Tomb J.-F."/>
            <person name="Gordon M.P."/>
            <person name="Olson M.V."/>
            <person name="Nester E.W."/>
        </authorList>
    </citation>
    <scope>NUCLEOTIDE SEQUENCE [LARGE SCALE GENOMIC DNA]</scope>
    <source>
        <strain>C58 / ATCC 33970</strain>
    </source>
</reference>
<reference key="2">
    <citation type="journal article" date="2001" name="Science">
        <title>Genome sequence of the plant pathogen and biotechnology agent Agrobacterium tumefaciens C58.</title>
        <authorList>
            <person name="Goodner B."/>
            <person name="Hinkle G."/>
            <person name="Gattung S."/>
            <person name="Miller N."/>
            <person name="Blanchard M."/>
            <person name="Qurollo B."/>
            <person name="Goldman B.S."/>
            <person name="Cao Y."/>
            <person name="Askenazi M."/>
            <person name="Halling C."/>
            <person name="Mullin L."/>
            <person name="Houmiel K."/>
            <person name="Gordon J."/>
            <person name="Vaudin M."/>
            <person name="Iartchouk O."/>
            <person name="Epp A."/>
            <person name="Liu F."/>
            <person name="Wollam C."/>
            <person name="Allinger M."/>
            <person name="Doughty D."/>
            <person name="Scott C."/>
            <person name="Lappas C."/>
            <person name="Markelz B."/>
            <person name="Flanagan C."/>
            <person name="Crowell C."/>
            <person name="Gurson J."/>
            <person name="Lomo C."/>
            <person name="Sear C."/>
            <person name="Strub G."/>
            <person name="Cielo C."/>
            <person name="Slater S."/>
        </authorList>
    </citation>
    <scope>NUCLEOTIDE SEQUENCE [LARGE SCALE GENOMIC DNA]</scope>
    <source>
        <strain>C58 / ATCC 33970</strain>
    </source>
</reference>
<organism>
    <name type="scientific">Agrobacterium fabrum (strain C58 / ATCC 33970)</name>
    <name type="common">Agrobacterium tumefaciens (strain C58)</name>
    <dbReference type="NCBI Taxonomy" id="176299"/>
    <lineage>
        <taxon>Bacteria</taxon>
        <taxon>Pseudomonadati</taxon>
        <taxon>Pseudomonadota</taxon>
        <taxon>Alphaproteobacteria</taxon>
        <taxon>Hyphomicrobiales</taxon>
        <taxon>Rhizobiaceae</taxon>
        <taxon>Rhizobium/Agrobacterium group</taxon>
        <taxon>Agrobacterium</taxon>
        <taxon>Agrobacterium tumefaciens complex</taxon>
    </lineage>
</organism>